<evidence type="ECO:0000255" key="1">
    <source>
        <dbReference type="HAMAP-Rule" id="MF_01609"/>
    </source>
</evidence>
<comment type="function">
    <text evidence="1">ATP-dependent carboxylate-amine ligase which exhibits weak glutamate--cysteine ligase activity.</text>
</comment>
<comment type="catalytic activity">
    <reaction evidence="1">
        <text>L-cysteine + L-glutamate + ATP = gamma-L-glutamyl-L-cysteine + ADP + phosphate + H(+)</text>
        <dbReference type="Rhea" id="RHEA:13285"/>
        <dbReference type="ChEBI" id="CHEBI:15378"/>
        <dbReference type="ChEBI" id="CHEBI:29985"/>
        <dbReference type="ChEBI" id="CHEBI:30616"/>
        <dbReference type="ChEBI" id="CHEBI:35235"/>
        <dbReference type="ChEBI" id="CHEBI:43474"/>
        <dbReference type="ChEBI" id="CHEBI:58173"/>
        <dbReference type="ChEBI" id="CHEBI:456216"/>
        <dbReference type="EC" id="6.3.2.2"/>
    </reaction>
</comment>
<comment type="similarity">
    <text evidence="1">Belongs to the glutamate--cysteine ligase type 2 family. YbdK subfamily.</text>
</comment>
<protein>
    <recommendedName>
        <fullName evidence="1">Putative glutamate--cysteine ligase 2-1</fullName>
        <ecNumber evidence="1">6.3.2.2</ecNumber>
    </recommendedName>
    <alternativeName>
        <fullName evidence="1">Gamma-glutamylcysteine synthetase 2-1</fullName>
        <shortName evidence="1">GCS 2-1</shortName>
        <shortName evidence="1">Gamma-GCS 2-1</shortName>
    </alternativeName>
</protein>
<name>GCS21_FRAAA</name>
<accession>Q0RRF4</accession>
<sequence length="382" mass="42217">MQIPFSSSTSSSLGIEWELQLVDQQSRELRGEATLILDELRAKVGEREAAKAKHELFESTVEVITGVCGSVGEATADLAGTVSLLRDLAERRGVGLMCSGTHPTSDYAGQRITDDNRYSRLVSQMQWLARRLLIFGVHVHVGVRSPDKAMPIMNALMVYIPHFLALSASSPFWLGGDTGLASSRSQVFASLPTAGLPYPLEDWPRFESFMETLIAAGTIETIREVWWDIRPHPNFGTVELRICDGLPTLLEVGAVAALAQCLVDRMNTQIDRGYRLPTPQRWLVQENKWRAARYGLDAQILIDDRGGVRSVRDDLVDLVEDLLPVAHRLDCAQQLADVLVILETGASYTRQRAVARRADGDLTRVVDTLLEEMNTGRPVVAG</sequence>
<reference key="1">
    <citation type="journal article" date="2007" name="Genome Res.">
        <title>Genome characteristics of facultatively symbiotic Frankia sp. strains reflect host range and host plant biogeography.</title>
        <authorList>
            <person name="Normand P."/>
            <person name="Lapierre P."/>
            <person name="Tisa L.S."/>
            <person name="Gogarten J.P."/>
            <person name="Alloisio N."/>
            <person name="Bagnarol E."/>
            <person name="Bassi C.A."/>
            <person name="Berry A.M."/>
            <person name="Bickhart D.M."/>
            <person name="Choisne N."/>
            <person name="Couloux A."/>
            <person name="Cournoyer B."/>
            <person name="Cruveiller S."/>
            <person name="Daubin V."/>
            <person name="Demange N."/>
            <person name="Francino M.P."/>
            <person name="Goltsman E."/>
            <person name="Huang Y."/>
            <person name="Kopp O.R."/>
            <person name="Labarre L."/>
            <person name="Lapidus A."/>
            <person name="Lavire C."/>
            <person name="Marechal J."/>
            <person name="Martinez M."/>
            <person name="Mastronunzio J.E."/>
            <person name="Mullin B.C."/>
            <person name="Niemann J."/>
            <person name="Pujic P."/>
            <person name="Rawnsley T."/>
            <person name="Rouy Z."/>
            <person name="Schenowitz C."/>
            <person name="Sellstedt A."/>
            <person name="Tavares F."/>
            <person name="Tomkins J.P."/>
            <person name="Vallenet D."/>
            <person name="Valverde C."/>
            <person name="Wall L.G."/>
            <person name="Wang Y."/>
            <person name="Medigue C."/>
            <person name="Benson D.R."/>
        </authorList>
    </citation>
    <scope>NUCLEOTIDE SEQUENCE [LARGE SCALE GENOMIC DNA]</scope>
    <source>
        <strain>DSM 45986 / CECT 9034 / ACN14a</strain>
    </source>
</reference>
<dbReference type="EC" id="6.3.2.2" evidence="1"/>
<dbReference type="EMBL" id="CT573213">
    <property type="protein sequence ID" value="CAJ59865.1"/>
    <property type="molecule type" value="Genomic_DNA"/>
</dbReference>
<dbReference type="RefSeq" id="WP_011602406.1">
    <property type="nucleotide sequence ID" value="NC_008278.1"/>
</dbReference>
<dbReference type="SMR" id="Q0RRF4"/>
<dbReference type="STRING" id="326424.FRAAL1203"/>
<dbReference type="KEGG" id="fal:FRAAL1203"/>
<dbReference type="eggNOG" id="COG2170">
    <property type="taxonomic scope" value="Bacteria"/>
</dbReference>
<dbReference type="HOGENOM" id="CLU_044848_1_0_11"/>
<dbReference type="OrthoDB" id="9769628at2"/>
<dbReference type="Proteomes" id="UP000000657">
    <property type="component" value="Chromosome"/>
</dbReference>
<dbReference type="GO" id="GO:0005524">
    <property type="term" value="F:ATP binding"/>
    <property type="evidence" value="ECO:0007669"/>
    <property type="project" value="UniProtKB-KW"/>
</dbReference>
<dbReference type="GO" id="GO:0004357">
    <property type="term" value="F:glutamate-cysteine ligase activity"/>
    <property type="evidence" value="ECO:0007669"/>
    <property type="project" value="UniProtKB-EC"/>
</dbReference>
<dbReference type="GO" id="GO:0042398">
    <property type="term" value="P:modified amino acid biosynthetic process"/>
    <property type="evidence" value="ECO:0007669"/>
    <property type="project" value="InterPro"/>
</dbReference>
<dbReference type="Gene3D" id="3.30.590.20">
    <property type="match status" value="1"/>
</dbReference>
<dbReference type="HAMAP" id="MF_01609">
    <property type="entry name" value="Glu_cys_ligase_2"/>
    <property type="match status" value="1"/>
</dbReference>
<dbReference type="InterPro" id="IPR050141">
    <property type="entry name" value="GCL_type2/YbdK_subfam"/>
</dbReference>
<dbReference type="InterPro" id="IPR006336">
    <property type="entry name" value="GCS2"/>
</dbReference>
<dbReference type="InterPro" id="IPR014746">
    <property type="entry name" value="Gln_synth/guanido_kin_cat_dom"/>
</dbReference>
<dbReference type="InterPro" id="IPR011793">
    <property type="entry name" value="YbdK"/>
</dbReference>
<dbReference type="NCBIfam" id="TIGR02050">
    <property type="entry name" value="gshA_cyan_rel"/>
    <property type="match status" value="1"/>
</dbReference>
<dbReference type="NCBIfam" id="NF010042">
    <property type="entry name" value="PRK13517.1-2"/>
    <property type="match status" value="1"/>
</dbReference>
<dbReference type="NCBIfam" id="NF010043">
    <property type="entry name" value="PRK13517.1-3"/>
    <property type="match status" value="1"/>
</dbReference>
<dbReference type="NCBIfam" id="NF010044">
    <property type="entry name" value="PRK13517.1-4"/>
    <property type="match status" value="1"/>
</dbReference>
<dbReference type="PANTHER" id="PTHR36510">
    <property type="entry name" value="GLUTAMATE--CYSTEINE LIGASE 2-RELATED"/>
    <property type="match status" value="1"/>
</dbReference>
<dbReference type="PANTHER" id="PTHR36510:SF1">
    <property type="entry name" value="GLUTAMATE--CYSTEINE LIGASE 2-RELATED"/>
    <property type="match status" value="1"/>
</dbReference>
<dbReference type="Pfam" id="PF04107">
    <property type="entry name" value="GCS2"/>
    <property type="match status" value="1"/>
</dbReference>
<dbReference type="SUPFAM" id="SSF55931">
    <property type="entry name" value="Glutamine synthetase/guanido kinase"/>
    <property type="match status" value="1"/>
</dbReference>
<feature type="chain" id="PRO_0000291490" description="Putative glutamate--cysteine ligase 2-1">
    <location>
        <begin position="1"/>
        <end position="382"/>
    </location>
</feature>
<proteinExistence type="inferred from homology"/>
<keyword id="KW-0067">ATP-binding</keyword>
<keyword id="KW-0436">Ligase</keyword>
<keyword id="KW-0547">Nucleotide-binding</keyword>
<keyword id="KW-1185">Reference proteome</keyword>
<organism>
    <name type="scientific">Frankia alni (strain DSM 45986 / CECT 9034 / ACN14a)</name>
    <dbReference type="NCBI Taxonomy" id="326424"/>
    <lineage>
        <taxon>Bacteria</taxon>
        <taxon>Bacillati</taxon>
        <taxon>Actinomycetota</taxon>
        <taxon>Actinomycetes</taxon>
        <taxon>Frankiales</taxon>
        <taxon>Frankiaceae</taxon>
        <taxon>Frankia</taxon>
    </lineage>
</organism>
<gene>
    <name type="ordered locus">FRAAL1203</name>
</gene>